<sequence>MNSSMASAGLGSRRKDPVYRGIRCRSGKWVSEIREPRKTTRIWLGTYPMAEMAAAAYDVAAMALKGREAVLNFPGSVGSYPVPESTSAADIRAAAAAAAAMKGCEEGEEEKKAKEKKSSSSKSRARECHVDNDVGSSSWCGTEFMDEEEVLNMPNLLANMAEGMMVAPPSWMGSRPSDDSPENSNDEDLWGY</sequence>
<evidence type="ECO:0000250" key="1"/>
<evidence type="ECO:0000255" key="2">
    <source>
        <dbReference type="PROSITE-ProRule" id="PRU00366"/>
    </source>
</evidence>
<evidence type="ECO:0000256" key="3">
    <source>
        <dbReference type="SAM" id="MobiDB-lite"/>
    </source>
</evidence>
<evidence type="ECO:0000305" key="4"/>
<protein>
    <recommendedName>
        <fullName>Ethylene-responsive transcription factor ERF027</fullName>
    </recommendedName>
</protein>
<gene>
    <name type="primary">ERF027</name>
    <name type="ordered locus">At1g12630</name>
    <name type="ORF">T12C24.16</name>
</gene>
<proteinExistence type="evidence at transcript level"/>
<comment type="function">
    <text evidence="1">Probably acts as a transcriptional activator. Binds to the GCC-box pathogenesis-related promoter element. May be involved in the regulation of gene expression by stress factors and by components of stress signal transduction pathways (By similarity).</text>
</comment>
<comment type="subcellular location">
    <subcellularLocation>
        <location evidence="4">Nucleus</location>
    </subcellularLocation>
</comment>
<comment type="similarity">
    <text evidence="4">Belongs to the AP2/ERF transcription factor family. ERF subfamily.</text>
</comment>
<comment type="sequence caution" evidence="4">
    <conflict type="erroneous initiation">
        <sequence resource="EMBL-CDS" id="AAF88080"/>
    </conflict>
</comment>
<comment type="sequence caution" evidence="4">
    <conflict type="erroneous termination">
        <sequence resource="EMBL-CDS" id="ABK28393"/>
    </conflict>
    <text>Extended C-terminus.</text>
</comment>
<name>ERF27_ARATH</name>
<reference key="1">
    <citation type="journal article" date="2005" name="Plant Mol. Biol.">
        <title>An annotation update via cDNA sequence analysis and comprehensive profiling of developmental, hormonal or environmental responsiveness of the Arabidopsis AP2/EREBP transcription factor gene family.</title>
        <authorList>
            <person name="Feng J.-X."/>
            <person name="Liu D."/>
            <person name="Pan Y."/>
            <person name="Gong W."/>
            <person name="Ma L.-G."/>
            <person name="Luo J.-C."/>
            <person name="Deng X.-W."/>
            <person name="Zhu Y.-X."/>
        </authorList>
    </citation>
    <scope>NUCLEOTIDE SEQUENCE [MRNA]</scope>
    <source>
        <strain>cv. Columbia</strain>
    </source>
</reference>
<reference key="2">
    <citation type="journal article" date="2000" name="Nature">
        <title>Sequence and analysis of chromosome 1 of the plant Arabidopsis thaliana.</title>
        <authorList>
            <person name="Theologis A."/>
            <person name="Ecker J.R."/>
            <person name="Palm C.J."/>
            <person name="Federspiel N.A."/>
            <person name="Kaul S."/>
            <person name="White O."/>
            <person name="Alonso J."/>
            <person name="Altafi H."/>
            <person name="Araujo R."/>
            <person name="Bowman C.L."/>
            <person name="Brooks S.Y."/>
            <person name="Buehler E."/>
            <person name="Chan A."/>
            <person name="Chao Q."/>
            <person name="Chen H."/>
            <person name="Cheuk R.F."/>
            <person name="Chin C.W."/>
            <person name="Chung M.K."/>
            <person name="Conn L."/>
            <person name="Conway A.B."/>
            <person name="Conway A.R."/>
            <person name="Creasy T.H."/>
            <person name="Dewar K."/>
            <person name="Dunn P."/>
            <person name="Etgu P."/>
            <person name="Feldblyum T.V."/>
            <person name="Feng J.-D."/>
            <person name="Fong B."/>
            <person name="Fujii C.Y."/>
            <person name="Gill J.E."/>
            <person name="Goldsmith A.D."/>
            <person name="Haas B."/>
            <person name="Hansen N.F."/>
            <person name="Hughes B."/>
            <person name="Huizar L."/>
            <person name="Hunter J.L."/>
            <person name="Jenkins J."/>
            <person name="Johnson-Hopson C."/>
            <person name="Khan S."/>
            <person name="Khaykin E."/>
            <person name="Kim C.J."/>
            <person name="Koo H.L."/>
            <person name="Kremenetskaia I."/>
            <person name="Kurtz D.B."/>
            <person name="Kwan A."/>
            <person name="Lam B."/>
            <person name="Langin-Hooper S."/>
            <person name="Lee A."/>
            <person name="Lee J.M."/>
            <person name="Lenz C.A."/>
            <person name="Li J.H."/>
            <person name="Li Y.-P."/>
            <person name="Lin X."/>
            <person name="Liu S.X."/>
            <person name="Liu Z.A."/>
            <person name="Luros J.S."/>
            <person name="Maiti R."/>
            <person name="Marziali A."/>
            <person name="Militscher J."/>
            <person name="Miranda M."/>
            <person name="Nguyen M."/>
            <person name="Nierman W.C."/>
            <person name="Osborne B.I."/>
            <person name="Pai G."/>
            <person name="Peterson J."/>
            <person name="Pham P.K."/>
            <person name="Rizzo M."/>
            <person name="Rooney T."/>
            <person name="Rowley D."/>
            <person name="Sakano H."/>
            <person name="Salzberg S.L."/>
            <person name="Schwartz J.R."/>
            <person name="Shinn P."/>
            <person name="Southwick A.M."/>
            <person name="Sun H."/>
            <person name="Tallon L.J."/>
            <person name="Tambunga G."/>
            <person name="Toriumi M.J."/>
            <person name="Town C.D."/>
            <person name="Utterback T."/>
            <person name="Van Aken S."/>
            <person name="Vaysberg M."/>
            <person name="Vysotskaia V.S."/>
            <person name="Walker M."/>
            <person name="Wu D."/>
            <person name="Yu G."/>
            <person name="Fraser C.M."/>
            <person name="Venter J.C."/>
            <person name="Davis R.W."/>
        </authorList>
    </citation>
    <scope>NUCLEOTIDE SEQUENCE [LARGE SCALE GENOMIC DNA]</scope>
    <source>
        <strain>cv. Columbia</strain>
    </source>
</reference>
<reference key="3">
    <citation type="journal article" date="2017" name="Plant J.">
        <title>Araport11: a complete reannotation of the Arabidopsis thaliana reference genome.</title>
        <authorList>
            <person name="Cheng C.Y."/>
            <person name="Krishnakumar V."/>
            <person name="Chan A.P."/>
            <person name="Thibaud-Nissen F."/>
            <person name="Schobel S."/>
            <person name="Town C.D."/>
        </authorList>
    </citation>
    <scope>GENOME REANNOTATION</scope>
    <source>
        <strain>cv. Columbia</strain>
    </source>
</reference>
<reference key="4">
    <citation type="journal article" date="2006" name="Plant Biotechnol. J.">
        <title>Simultaneous high-throughput recombinational cloning of open reading frames in closed and open configurations.</title>
        <authorList>
            <person name="Underwood B.A."/>
            <person name="Vanderhaeghen R."/>
            <person name="Whitford R."/>
            <person name="Town C.D."/>
            <person name="Hilson P."/>
        </authorList>
    </citation>
    <scope>NUCLEOTIDE SEQUENCE [LARGE SCALE MRNA] OF 5-192</scope>
    <source>
        <strain>cv. Columbia</strain>
    </source>
</reference>
<reference key="5">
    <citation type="submission" date="2004-02" db="EMBL/GenBank/DDBJ databases">
        <title>Molecular cloning, expression, phylogenetic and functional characterization of the Arabidopsis AP2/EREBP transcription factor family.</title>
        <authorList>
            <person name="Pan Y."/>
            <person name="Gong W."/>
            <person name="Liu D."/>
            <person name="Fu Q."/>
            <person name="Mei W.-Q."/>
            <person name="Song W.-Q."/>
            <person name="Ma L.-G."/>
            <person name="Luo J.-C."/>
            <person name="Deng X.-W."/>
            <person name="Zhu Y.-X."/>
        </authorList>
    </citation>
    <scope>NUCLEOTIDE SEQUENCE [MRNA] OF 5-192</scope>
</reference>
<reference key="6">
    <citation type="journal article" date="2006" name="Plant Physiol.">
        <title>Genome-wide analysis of the ERF gene family in Arabidopsis and rice.</title>
        <authorList>
            <person name="Nakano T."/>
            <person name="Suzuki K."/>
            <person name="Fujimura T."/>
            <person name="Shinshi H."/>
        </authorList>
    </citation>
    <scope>GENE FAMILY</scope>
    <scope>NOMENCLATURE</scope>
</reference>
<dbReference type="EMBL" id="DQ145776">
    <property type="protein sequence ID" value="ABB02373.1"/>
    <property type="molecule type" value="mRNA"/>
</dbReference>
<dbReference type="EMBL" id="AC025417">
    <property type="protein sequence ID" value="AAF88080.1"/>
    <property type="status" value="ALT_INIT"/>
    <property type="molecule type" value="Genomic_DNA"/>
</dbReference>
<dbReference type="EMBL" id="CP002684">
    <property type="protein sequence ID" value="AEE28903.1"/>
    <property type="molecule type" value="Genomic_DNA"/>
</dbReference>
<dbReference type="EMBL" id="DQ446245">
    <property type="protein sequence ID" value="ABE65615.1"/>
    <property type="molecule type" value="mRNA"/>
</dbReference>
<dbReference type="EMBL" id="DQ652834">
    <property type="protein sequence ID" value="ABK28393.1"/>
    <property type="status" value="ALT_SEQ"/>
    <property type="molecule type" value="mRNA"/>
</dbReference>
<dbReference type="EMBL" id="AY560893">
    <property type="protein sequence ID" value="AAT44960.1"/>
    <property type="molecule type" value="mRNA"/>
</dbReference>
<dbReference type="PIR" id="A86260">
    <property type="entry name" value="A86260"/>
</dbReference>
<dbReference type="RefSeq" id="NP_172723.2">
    <property type="nucleotide sequence ID" value="NM_101133.3"/>
</dbReference>
<dbReference type="SMR" id="Q38Q39"/>
<dbReference type="BioGRID" id="23059">
    <property type="interactions" value="1"/>
</dbReference>
<dbReference type="IntAct" id="Q38Q39">
    <property type="interactions" value="1"/>
</dbReference>
<dbReference type="STRING" id="3702.Q38Q39"/>
<dbReference type="iPTMnet" id="Q38Q39"/>
<dbReference type="PaxDb" id="3702-AT1G12630.1"/>
<dbReference type="EnsemblPlants" id="AT1G12630.1">
    <property type="protein sequence ID" value="AT1G12630.1"/>
    <property type="gene ID" value="AT1G12630"/>
</dbReference>
<dbReference type="GeneID" id="837819"/>
<dbReference type="Gramene" id="AT1G12630.1">
    <property type="protein sequence ID" value="AT1G12630.1"/>
    <property type="gene ID" value="AT1G12630"/>
</dbReference>
<dbReference type="KEGG" id="ath:AT1G12630"/>
<dbReference type="Araport" id="AT1G12630"/>
<dbReference type="TAIR" id="AT1G12630"/>
<dbReference type="eggNOG" id="ENOG502RZJ7">
    <property type="taxonomic scope" value="Eukaryota"/>
</dbReference>
<dbReference type="HOGENOM" id="CLU_063331_1_1_1"/>
<dbReference type="InParanoid" id="Q38Q39"/>
<dbReference type="OMA" id="ASMKGCE"/>
<dbReference type="PhylomeDB" id="Q38Q39"/>
<dbReference type="PRO" id="PR:Q38Q39"/>
<dbReference type="Proteomes" id="UP000006548">
    <property type="component" value="Chromosome 1"/>
</dbReference>
<dbReference type="ExpressionAtlas" id="Q38Q39">
    <property type="expression patterns" value="baseline and differential"/>
</dbReference>
<dbReference type="GO" id="GO:0005634">
    <property type="term" value="C:nucleus"/>
    <property type="evidence" value="ECO:0007669"/>
    <property type="project" value="UniProtKB-SubCell"/>
</dbReference>
<dbReference type="GO" id="GO:0003700">
    <property type="term" value="F:DNA-binding transcription factor activity"/>
    <property type="evidence" value="ECO:0000250"/>
    <property type="project" value="TAIR"/>
</dbReference>
<dbReference type="GO" id="GO:0000976">
    <property type="term" value="F:transcription cis-regulatory region binding"/>
    <property type="evidence" value="ECO:0000353"/>
    <property type="project" value="TAIR"/>
</dbReference>
<dbReference type="GO" id="GO:0009873">
    <property type="term" value="P:ethylene-activated signaling pathway"/>
    <property type="evidence" value="ECO:0007669"/>
    <property type="project" value="UniProtKB-KW"/>
</dbReference>
<dbReference type="GO" id="GO:0019760">
    <property type="term" value="P:glucosinolate metabolic process"/>
    <property type="evidence" value="ECO:0000315"/>
    <property type="project" value="TAIR"/>
</dbReference>
<dbReference type="CDD" id="cd00018">
    <property type="entry name" value="AP2"/>
    <property type="match status" value="1"/>
</dbReference>
<dbReference type="FunFam" id="3.30.730.10:FF:000001">
    <property type="entry name" value="Ethylene-responsive transcription factor 2"/>
    <property type="match status" value="1"/>
</dbReference>
<dbReference type="Gene3D" id="3.30.730.10">
    <property type="entry name" value="AP2/ERF domain"/>
    <property type="match status" value="1"/>
</dbReference>
<dbReference type="InterPro" id="IPR001471">
    <property type="entry name" value="AP2/ERF_dom"/>
</dbReference>
<dbReference type="InterPro" id="IPR036955">
    <property type="entry name" value="AP2/ERF_dom_sf"/>
</dbReference>
<dbReference type="InterPro" id="IPR016177">
    <property type="entry name" value="DNA-bd_dom_sf"/>
</dbReference>
<dbReference type="InterPro" id="IPR045277">
    <property type="entry name" value="DRE1A-I"/>
</dbReference>
<dbReference type="PANTHER" id="PTHR31839:SF85">
    <property type="entry name" value="AP2_ERF DOMAIN-CONTAINING PROTEIN"/>
    <property type="match status" value="1"/>
</dbReference>
<dbReference type="PANTHER" id="PTHR31839">
    <property type="entry name" value="DEHYDRATION-RESPONSIVE ELEMENT-BINDING PROTEIN 1D"/>
    <property type="match status" value="1"/>
</dbReference>
<dbReference type="Pfam" id="PF00847">
    <property type="entry name" value="AP2"/>
    <property type="match status" value="1"/>
</dbReference>
<dbReference type="PRINTS" id="PR00367">
    <property type="entry name" value="ETHRSPELEMNT"/>
</dbReference>
<dbReference type="SMART" id="SM00380">
    <property type="entry name" value="AP2"/>
    <property type="match status" value="1"/>
</dbReference>
<dbReference type="SUPFAM" id="SSF54171">
    <property type="entry name" value="DNA-binding domain"/>
    <property type="match status" value="1"/>
</dbReference>
<dbReference type="PROSITE" id="PS51032">
    <property type="entry name" value="AP2_ERF"/>
    <property type="match status" value="1"/>
</dbReference>
<keyword id="KW-0010">Activator</keyword>
<keyword id="KW-0238">DNA-binding</keyword>
<keyword id="KW-0936">Ethylene signaling pathway</keyword>
<keyword id="KW-0539">Nucleus</keyword>
<keyword id="KW-1185">Reference proteome</keyword>
<keyword id="KW-0804">Transcription</keyword>
<keyword id="KW-0805">Transcription regulation</keyword>
<feature type="chain" id="PRO_0000297923" description="Ethylene-responsive transcription factor ERF027">
    <location>
        <begin position="1"/>
        <end position="192"/>
    </location>
</feature>
<feature type="DNA-binding region" description="AP2/ERF" evidence="2">
    <location>
        <begin position="18"/>
        <end position="74"/>
    </location>
</feature>
<feature type="region of interest" description="Disordered" evidence="3">
    <location>
        <begin position="104"/>
        <end position="132"/>
    </location>
</feature>
<feature type="region of interest" description="Disordered" evidence="3">
    <location>
        <begin position="167"/>
        <end position="192"/>
    </location>
</feature>
<feature type="compositionally biased region" description="Acidic residues" evidence="3">
    <location>
        <begin position="179"/>
        <end position="192"/>
    </location>
</feature>
<organism>
    <name type="scientific">Arabidopsis thaliana</name>
    <name type="common">Mouse-ear cress</name>
    <dbReference type="NCBI Taxonomy" id="3702"/>
    <lineage>
        <taxon>Eukaryota</taxon>
        <taxon>Viridiplantae</taxon>
        <taxon>Streptophyta</taxon>
        <taxon>Embryophyta</taxon>
        <taxon>Tracheophyta</taxon>
        <taxon>Spermatophyta</taxon>
        <taxon>Magnoliopsida</taxon>
        <taxon>eudicotyledons</taxon>
        <taxon>Gunneridae</taxon>
        <taxon>Pentapetalae</taxon>
        <taxon>rosids</taxon>
        <taxon>malvids</taxon>
        <taxon>Brassicales</taxon>
        <taxon>Brassicaceae</taxon>
        <taxon>Camelineae</taxon>
        <taxon>Arabidopsis</taxon>
    </lineage>
</organism>
<accession>Q38Q39</accession>
<accession>A0ME66</accession>
<accession>Q9LN84</accession>